<feature type="signal peptide" evidence="2">
    <location>
        <begin position="1"/>
        <end position="32"/>
    </location>
</feature>
<feature type="chain" id="PRO_0000003967" description="Protocadherin gamma-A10">
    <location>
        <begin position="33"/>
        <end position="936"/>
    </location>
</feature>
<feature type="topological domain" description="Extracellular" evidence="2">
    <location>
        <begin position="33"/>
        <end position="696"/>
    </location>
</feature>
<feature type="transmembrane region" description="Helical" evidence="2">
    <location>
        <begin position="697"/>
        <end position="717"/>
    </location>
</feature>
<feature type="topological domain" description="Cytoplasmic" evidence="2">
    <location>
        <begin position="718"/>
        <end position="936"/>
    </location>
</feature>
<feature type="domain" description="Cadherin 1" evidence="3">
    <location>
        <begin position="33"/>
        <end position="137"/>
    </location>
</feature>
<feature type="domain" description="Cadherin 2" evidence="3">
    <location>
        <begin position="138"/>
        <end position="246"/>
    </location>
</feature>
<feature type="domain" description="Cadherin 3" evidence="3">
    <location>
        <begin position="247"/>
        <end position="351"/>
    </location>
</feature>
<feature type="domain" description="Cadherin 4" evidence="3">
    <location>
        <begin position="352"/>
        <end position="456"/>
    </location>
</feature>
<feature type="domain" description="Cadherin 5" evidence="3">
    <location>
        <begin position="457"/>
        <end position="566"/>
    </location>
</feature>
<feature type="domain" description="Cadherin 6" evidence="3">
    <location>
        <begin position="574"/>
        <end position="687"/>
    </location>
</feature>
<feature type="region of interest" description="Disordered" evidence="4">
    <location>
        <begin position="801"/>
        <end position="845"/>
    </location>
</feature>
<feature type="region of interest" description="Disordered" evidence="4">
    <location>
        <begin position="906"/>
        <end position="936"/>
    </location>
</feature>
<feature type="compositionally biased region" description="Polar residues" evidence="4">
    <location>
        <begin position="820"/>
        <end position="845"/>
    </location>
</feature>
<feature type="compositionally biased region" description="Basic residues" evidence="4">
    <location>
        <begin position="926"/>
        <end position="936"/>
    </location>
</feature>
<feature type="glycosylation site" description="N-linked (GlcNAc...) asparagine" evidence="2">
    <location>
        <position position="51"/>
    </location>
</feature>
<feature type="glycosylation site" description="N-linked (GlcNAc...) asparagine" evidence="2">
    <location>
        <position position="423"/>
    </location>
</feature>
<feature type="glycosylation site" description="N-linked (GlcNAc...) asparagine" evidence="2">
    <location>
        <position position="549"/>
    </location>
</feature>
<protein>
    <recommendedName>
        <fullName>Protocadherin gamma-A10</fullName>
        <shortName>PCDH-gamma-A10</shortName>
    </recommendedName>
</protein>
<proteinExistence type="inferred from homology"/>
<dbReference type="SMR" id="Q5DRC1"/>
<dbReference type="FunCoup" id="Q5DRC1">
    <property type="interactions" value="7"/>
</dbReference>
<dbReference type="GlyCosmos" id="Q5DRC1">
    <property type="glycosylation" value="3 sites, No reported glycans"/>
</dbReference>
<dbReference type="Ensembl" id="ENSPTRT00000093009.1">
    <property type="protein sequence ID" value="ENSPTRP00000090455.1"/>
    <property type="gene ID" value="ENSPTRG00000017346.7"/>
</dbReference>
<dbReference type="GeneTree" id="ENSGT00940000162232"/>
<dbReference type="InParanoid" id="Q5DRC1"/>
<dbReference type="OMA" id="TEIHFML"/>
<dbReference type="Proteomes" id="UP000002277">
    <property type="component" value="Chromosome 5"/>
</dbReference>
<dbReference type="Bgee" id="ENSPTRG00000017346">
    <property type="expression patterns" value="Expressed in dorsolateral prefrontal cortex and 21 other cell types or tissues"/>
</dbReference>
<dbReference type="GO" id="GO:0005886">
    <property type="term" value="C:plasma membrane"/>
    <property type="evidence" value="ECO:0000318"/>
    <property type="project" value="GO_Central"/>
</dbReference>
<dbReference type="GO" id="GO:0005509">
    <property type="term" value="F:calcium ion binding"/>
    <property type="evidence" value="ECO:0007669"/>
    <property type="project" value="InterPro"/>
</dbReference>
<dbReference type="GO" id="GO:0007155">
    <property type="term" value="P:cell adhesion"/>
    <property type="evidence" value="ECO:0000318"/>
    <property type="project" value="GO_Central"/>
</dbReference>
<dbReference type="GO" id="GO:0007156">
    <property type="term" value="P:homophilic cell adhesion via plasma membrane adhesion molecules"/>
    <property type="evidence" value="ECO:0007669"/>
    <property type="project" value="InterPro"/>
</dbReference>
<dbReference type="GO" id="GO:0007399">
    <property type="term" value="P:nervous system development"/>
    <property type="evidence" value="ECO:0007669"/>
    <property type="project" value="UniProtKB-ARBA"/>
</dbReference>
<dbReference type="CDD" id="cd11304">
    <property type="entry name" value="Cadherin_repeat"/>
    <property type="match status" value="6"/>
</dbReference>
<dbReference type="FunFam" id="2.60.40.60:FF:000004">
    <property type="entry name" value="Protocadherin 1 gamma 2"/>
    <property type="match status" value="1"/>
</dbReference>
<dbReference type="FunFam" id="2.60.40.60:FF:000001">
    <property type="entry name" value="Protocadherin alpha 2"/>
    <property type="match status" value="1"/>
</dbReference>
<dbReference type="FunFam" id="2.60.40.60:FF:000002">
    <property type="entry name" value="Protocadherin alpha 2"/>
    <property type="match status" value="1"/>
</dbReference>
<dbReference type="FunFam" id="2.60.40.60:FF:000006">
    <property type="entry name" value="Protocadherin alpha 2"/>
    <property type="match status" value="1"/>
</dbReference>
<dbReference type="FunFam" id="2.60.40.60:FF:000129">
    <property type="entry name" value="protocadherin alpha-C2 isoform X1"/>
    <property type="match status" value="1"/>
</dbReference>
<dbReference type="FunFam" id="2.60.40.60:FF:000018">
    <property type="entry name" value="Protocadherin gamma c3"/>
    <property type="match status" value="1"/>
</dbReference>
<dbReference type="Gene3D" id="2.60.40.60">
    <property type="entry name" value="Cadherins"/>
    <property type="match status" value="6"/>
</dbReference>
<dbReference type="InterPro" id="IPR002126">
    <property type="entry name" value="Cadherin-like_dom"/>
</dbReference>
<dbReference type="InterPro" id="IPR015919">
    <property type="entry name" value="Cadherin-like_sf"/>
</dbReference>
<dbReference type="InterPro" id="IPR032455">
    <property type="entry name" value="Cadherin_C"/>
</dbReference>
<dbReference type="InterPro" id="IPR031904">
    <property type="entry name" value="Cadherin_CBD"/>
</dbReference>
<dbReference type="InterPro" id="IPR020894">
    <property type="entry name" value="Cadherin_CS"/>
</dbReference>
<dbReference type="InterPro" id="IPR013164">
    <property type="entry name" value="Cadherin_N"/>
</dbReference>
<dbReference type="InterPro" id="IPR050174">
    <property type="entry name" value="Protocadherin/Cadherin-CA"/>
</dbReference>
<dbReference type="PANTHER" id="PTHR24028">
    <property type="entry name" value="CADHERIN-87A"/>
    <property type="match status" value="1"/>
</dbReference>
<dbReference type="PANTHER" id="PTHR24028:SF110">
    <property type="entry name" value="PROTOCADHERIN GAMMA-A10"/>
    <property type="match status" value="1"/>
</dbReference>
<dbReference type="Pfam" id="PF00028">
    <property type="entry name" value="Cadherin"/>
    <property type="match status" value="5"/>
</dbReference>
<dbReference type="Pfam" id="PF08266">
    <property type="entry name" value="Cadherin_2"/>
    <property type="match status" value="1"/>
</dbReference>
<dbReference type="Pfam" id="PF16492">
    <property type="entry name" value="Cadherin_C_2"/>
    <property type="match status" value="1"/>
</dbReference>
<dbReference type="Pfam" id="PF15974">
    <property type="entry name" value="Cadherin_tail"/>
    <property type="match status" value="1"/>
</dbReference>
<dbReference type="PRINTS" id="PR00205">
    <property type="entry name" value="CADHERIN"/>
</dbReference>
<dbReference type="SMART" id="SM00112">
    <property type="entry name" value="CA"/>
    <property type="match status" value="6"/>
</dbReference>
<dbReference type="SUPFAM" id="SSF49313">
    <property type="entry name" value="Cadherin-like"/>
    <property type="match status" value="6"/>
</dbReference>
<dbReference type="PROSITE" id="PS00232">
    <property type="entry name" value="CADHERIN_1"/>
    <property type="match status" value="5"/>
</dbReference>
<dbReference type="PROSITE" id="PS50268">
    <property type="entry name" value="CADHERIN_2"/>
    <property type="match status" value="6"/>
</dbReference>
<keyword id="KW-0106">Calcium</keyword>
<keyword id="KW-0130">Cell adhesion</keyword>
<keyword id="KW-1003">Cell membrane</keyword>
<keyword id="KW-0325">Glycoprotein</keyword>
<keyword id="KW-0472">Membrane</keyword>
<keyword id="KW-1185">Reference proteome</keyword>
<keyword id="KW-0677">Repeat</keyword>
<keyword id="KW-0732">Signal</keyword>
<keyword id="KW-0812">Transmembrane</keyword>
<keyword id="KW-1133">Transmembrane helix</keyword>
<name>PCDGA_PANTR</name>
<evidence type="ECO:0000250" key="1"/>
<evidence type="ECO:0000255" key="2"/>
<evidence type="ECO:0000255" key="3">
    <source>
        <dbReference type="PROSITE-ProRule" id="PRU00043"/>
    </source>
</evidence>
<evidence type="ECO:0000256" key="4">
    <source>
        <dbReference type="SAM" id="MobiDB-lite"/>
    </source>
</evidence>
<sequence>MAAQRNRSKESKDCSGLVLLCLFFGIPWEAGARQISYSIPEELEKGSFVGNISKDLGLAPRELAERGVRIVSRGRTQLFSLNPRSGSLVTAGRIDREELCAQSARCVVSFNILVEDRVKLFGIEIEVTDINDNAPTFQAENLDVKINENVAAGMRFPLPEAIDPDVGVNSLQSYQLSPNKHFSLRVQSRANGVKYPELVLEHSLDREEEAIHHLVLTASDGGDPLRSGTVLVSVTVFDANDNAPVFTLPEYRVSVPENLPVGTQLLTVTATDRDEGANGEVTYSFRKLPDTQLLKFQLNKYTGEIKISENLDYEETGFYEVEIQAEDGGAYLATAKVLITVEDVNDNSPELTITSLFSPVTEDSPLGTVVALLNVHDLDSEQNGQVTCSILAYLPFKLEKSIDSYYRLVIHRALDREQVSSYNITVRATDGGSPPLSTEAHFTLQVADINDNPPTFSQVSYFTYIPENNARGASIFSVTALDPDSKENARIIYSLAEDTIQGVPLSSYISINSDTGVLYALRSFDYEQFHELQMQVTASDSGDPPLSSNVSLSLFVLDQNDNAPEILYPALPTDGSTGVELAPRSAEPGYLVTKVVAVDRDSGQNAWLSYRLLKASEPGLFAVGEHTGEVRTARALLDRDALKQSLVVAVQDHGQPPLSATVTLTVAVADSIPQVLADLGSFESPANSETSDLTLYLVVAVAAVSCVFLAFVIVLLALRLRRWHKSRLLQASGGGLTGVSGSHFVGVDGVRAFLQTYSHEVSLTADSRKSHLIFPQPNYADTLISQESCEKKDPLSLLDDSKFPIEDTPLVPQAPPNTDWRFSQAQRPGTSGSQNGDDTGTWPNNQFDTEMLQAMILASASEAADGSSTLGGGAGTMGLSARYGPQFTLQHVPDYRQNVYIPGSNATLTNAAGKRDGKAPAGGNGNKKKSGKKEKK</sequence>
<reference key="1">
    <citation type="journal article" date="2005" name="Nature">
        <title>Initial sequence of the chimpanzee genome and comparison with the human genome.</title>
        <authorList>
            <consortium name="Chimpanzee sequencing and analysis consortium"/>
        </authorList>
    </citation>
    <scope>NUCLEOTIDE SEQUENCE [LARGE SCALE GENOMIC DNA]</scope>
</reference>
<reference key="2">
    <citation type="journal article" date="2005" name="Genetics">
        <title>Comparative genomics and diversifying selection of the clustered vertebrate protocadherin genes.</title>
        <authorList>
            <person name="Wu Q."/>
        </authorList>
    </citation>
    <scope>IDENTIFICATION</scope>
</reference>
<gene>
    <name type="primary">PCDHGA10</name>
</gene>
<comment type="function">
    <text>Potential calcium-dependent cell-adhesion protein. May be involved in the establishment and maintenance of specific neuronal connections in the brain.</text>
</comment>
<comment type="subcellular location">
    <subcellularLocation>
        <location evidence="1">Cell membrane</location>
        <topology evidence="1">Single-pass type I membrane protein</topology>
    </subcellularLocation>
</comment>
<organism>
    <name type="scientific">Pan troglodytes</name>
    <name type="common">Chimpanzee</name>
    <dbReference type="NCBI Taxonomy" id="9598"/>
    <lineage>
        <taxon>Eukaryota</taxon>
        <taxon>Metazoa</taxon>
        <taxon>Chordata</taxon>
        <taxon>Craniata</taxon>
        <taxon>Vertebrata</taxon>
        <taxon>Euteleostomi</taxon>
        <taxon>Mammalia</taxon>
        <taxon>Eutheria</taxon>
        <taxon>Euarchontoglires</taxon>
        <taxon>Primates</taxon>
        <taxon>Haplorrhini</taxon>
        <taxon>Catarrhini</taxon>
        <taxon>Hominidae</taxon>
        <taxon>Pan</taxon>
    </lineage>
</organism>
<accession>Q5DRC1</accession>